<proteinExistence type="evidence at protein level"/>
<sequence length="343" mass="38422">MSEDKAKLGTTRSATEYRLSIGSAPTSRRSSMGESSSLMKFADQEGLTSSVGEYNENTIQQLLLPKIRELSDSIITLDSNFTRLNFIHESLADLNESLGSLLYGIMSNSWCVEFSQAPHDIQDDLIAIKQLKSLEDEKNNLVMELSNMERGIKRKKDEQGENDLAKASQNKQFNQPLFPSSQVRKYRSYDNRDKRKPSKIGNNLQVENEEDYEDDTSSEASFVLNPTNIGMSKSSQGHVTKTTRLNNNTNSKLRRKSILHTIRNSIASGADLPIENDNVVNLGDLHPNNRISLGSGAARVVNGPVTKNRNSMFSGRAERKPTESRHSVAKKTEKKINTRPPFR</sequence>
<evidence type="ECO:0000250" key="1">
    <source>
        <dbReference type="UniProtKB" id="Q9HDZ6"/>
    </source>
</evidence>
<evidence type="ECO:0000255" key="2"/>
<evidence type="ECO:0000256" key="3">
    <source>
        <dbReference type="SAM" id="MobiDB-lite"/>
    </source>
</evidence>
<evidence type="ECO:0000269" key="4">
    <source>
    </source>
</evidence>
<evidence type="ECO:0000269" key="5">
    <source>
    </source>
</evidence>
<evidence type="ECO:0000269" key="6">
    <source>
    </source>
</evidence>
<evidence type="ECO:0000269" key="7">
    <source>
    </source>
</evidence>
<evidence type="ECO:0000269" key="8">
    <source>
    </source>
</evidence>
<evidence type="ECO:0000269" key="9">
    <source>
    </source>
</evidence>
<evidence type="ECO:0000269" key="10">
    <source>
    </source>
</evidence>
<evidence type="ECO:0000269" key="11">
    <source>
    </source>
</evidence>
<evidence type="ECO:0000269" key="12">
    <source>
    </source>
</evidence>
<evidence type="ECO:0000269" key="13">
    <source>
    </source>
</evidence>
<evidence type="ECO:0000269" key="14">
    <source>
    </source>
</evidence>
<evidence type="ECO:0000269" key="15">
    <source>
    </source>
</evidence>
<evidence type="ECO:0000269" key="16">
    <source>
    </source>
</evidence>
<evidence type="ECO:0000269" key="17">
    <source>
    </source>
</evidence>
<evidence type="ECO:0000269" key="18">
    <source>
    </source>
</evidence>
<evidence type="ECO:0000269" key="19">
    <source>
    </source>
</evidence>
<evidence type="ECO:0000269" key="20">
    <source>
    </source>
</evidence>
<evidence type="ECO:0000269" key="21">
    <source>
    </source>
</evidence>
<evidence type="ECO:0000269" key="22">
    <source>
    </source>
</evidence>
<evidence type="ECO:0000269" key="23">
    <source>
    </source>
</evidence>
<evidence type="ECO:0000269" key="24">
    <source>
    </source>
</evidence>
<evidence type="ECO:0000269" key="25">
    <source>
    </source>
</evidence>
<evidence type="ECO:0000305" key="26"/>
<evidence type="ECO:0007744" key="27">
    <source>
        <dbReference type="PDB" id="8G0Q"/>
    </source>
</evidence>
<evidence type="ECO:0007744" key="28">
    <source>
    </source>
</evidence>
<evidence type="ECO:0007744" key="29">
    <source>
    </source>
</evidence>
<evidence type="ECO:0007744" key="30">
    <source>
    </source>
</evidence>
<evidence type="ECO:0007829" key="31">
    <source>
        <dbReference type="PDB" id="8G0Q"/>
    </source>
</evidence>
<reference key="1">
    <citation type="journal article" date="2001" name="J. Cell Biol.">
        <title>Mitotic spindle integrity and kinetochore function linked by the Duo1p/Dam1p complex.</title>
        <authorList>
            <person name="Cheeseman I.M."/>
            <person name="Enquist-Newman M."/>
            <person name="Mueller-Reichert T."/>
            <person name="Drubin D.G."/>
            <person name="Barnes G."/>
        </authorList>
    </citation>
    <scope>NUCLEOTIDE SEQUENCE [GENOMIC DNA]</scope>
    <scope>KINETOCHORE FUNCTION</scope>
</reference>
<reference key="2">
    <citation type="journal article" date="1996" name="Yeast">
        <title>The sequence of a 23.4 kb segment on the right arm of chromosome VII from Saccharomyces cerevisiae reveals CLB6, SPT6, RP28A and NUP57 genes, a Ty3 element and 11 new open reading frames.</title>
        <authorList>
            <person name="Hansen M."/>
            <person name="Albers M."/>
            <person name="Backes U."/>
            <person name="Coblenz A."/>
            <person name="Leuther H."/>
            <person name="Neu R."/>
            <person name="Schreer A."/>
            <person name="Schaefer B."/>
            <person name="Zimmermann M."/>
            <person name="Wolf K."/>
        </authorList>
    </citation>
    <scope>NUCLEOTIDE SEQUENCE [LARGE SCALE GENOMIC DNA]</scope>
</reference>
<reference key="3">
    <citation type="journal article" date="2014" name="G3 (Bethesda)">
        <title>The reference genome sequence of Saccharomyces cerevisiae: Then and now.</title>
        <authorList>
            <person name="Engel S.R."/>
            <person name="Dietrich F.S."/>
            <person name="Fisk D.G."/>
            <person name="Binkley G."/>
            <person name="Balakrishnan R."/>
            <person name="Costanzo M.C."/>
            <person name="Dwight S.S."/>
            <person name="Hitz B.C."/>
            <person name="Karra K."/>
            <person name="Nash R.S."/>
            <person name="Weng S."/>
            <person name="Wong E.D."/>
            <person name="Lloyd P."/>
            <person name="Skrzypek M.S."/>
            <person name="Miyasato S.R."/>
            <person name="Simison M."/>
            <person name="Cherry J.M."/>
        </authorList>
    </citation>
    <scope>GENOME REANNOTATION</scope>
    <source>
        <strain>ATCC 204508 / S288c</strain>
    </source>
</reference>
<reference key="4">
    <citation type="journal article" date="1997" name="Nature">
        <title>The nucleotide sequence of Saccharomyces cerevisiae chromosome VII.</title>
        <authorList>
            <person name="Tettelin H."/>
            <person name="Agostoni-Carbone M.L."/>
            <person name="Albermann K."/>
            <person name="Albers M."/>
            <person name="Arroyo J."/>
            <person name="Backes U."/>
            <person name="Barreiros T."/>
            <person name="Bertani I."/>
            <person name="Bjourson A.J."/>
            <person name="Brueckner M."/>
            <person name="Bruschi C.V."/>
            <person name="Carignani G."/>
            <person name="Castagnoli L."/>
            <person name="Cerdan E."/>
            <person name="Clemente M.L."/>
            <person name="Coblenz A."/>
            <person name="Coglievina M."/>
            <person name="Coissac E."/>
            <person name="Defoor E."/>
            <person name="Del Bino S."/>
            <person name="Delius H."/>
            <person name="Delneri D."/>
            <person name="de Wergifosse P."/>
            <person name="Dujon B."/>
            <person name="Durand P."/>
            <person name="Entian K.-D."/>
            <person name="Eraso P."/>
            <person name="Escribano V."/>
            <person name="Fabiani L."/>
            <person name="Fartmann B."/>
            <person name="Feroli F."/>
            <person name="Feuermann M."/>
            <person name="Frontali L."/>
            <person name="Garcia-Gonzalez M."/>
            <person name="Garcia-Saez M.I."/>
            <person name="Goffeau A."/>
            <person name="Guerreiro P."/>
            <person name="Hani J."/>
            <person name="Hansen M."/>
            <person name="Hebling U."/>
            <person name="Hernandez K."/>
            <person name="Heumann K."/>
            <person name="Hilger F."/>
            <person name="Hofmann B."/>
            <person name="Indge K.J."/>
            <person name="James C.M."/>
            <person name="Klima R."/>
            <person name="Koetter P."/>
            <person name="Kramer B."/>
            <person name="Kramer W."/>
            <person name="Lauquin G."/>
            <person name="Leuther H."/>
            <person name="Louis E.J."/>
            <person name="Maillier E."/>
            <person name="Marconi A."/>
            <person name="Martegani E."/>
            <person name="Mazon M.J."/>
            <person name="Mazzoni C."/>
            <person name="McReynolds A.D.K."/>
            <person name="Melchioretto P."/>
            <person name="Mewes H.-W."/>
            <person name="Minenkova O."/>
            <person name="Mueller-Auer S."/>
            <person name="Nawrocki A."/>
            <person name="Netter P."/>
            <person name="Neu R."/>
            <person name="Nombela C."/>
            <person name="Oliver S.G."/>
            <person name="Panzeri L."/>
            <person name="Paoluzi S."/>
            <person name="Plevani P."/>
            <person name="Portetelle D."/>
            <person name="Portillo F."/>
            <person name="Potier S."/>
            <person name="Purnelle B."/>
            <person name="Rieger M."/>
            <person name="Riles L."/>
            <person name="Rinaldi T."/>
            <person name="Robben J."/>
            <person name="Rodrigues-Pousada C."/>
            <person name="Rodriguez-Belmonte E."/>
            <person name="Rodriguez-Torres A.M."/>
            <person name="Rose M."/>
            <person name="Ruzzi M."/>
            <person name="Saliola M."/>
            <person name="Sanchez-Perez M."/>
            <person name="Schaefer B."/>
            <person name="Schaefer M."/>
            <person name="Scharfe M."/>
            <person name="Schmidheini T."/>
            <person name="Schreer A."/>
            <person name="Skala J."/>
            <person name="Souciet J.-L."/>
            <person name="Steensma H.Y."/>
            <person name="Talla E."/>
            <person name="Thierry A."/>
            <person name="Vandenbol M."/>
            <person name="van der Aart Q.J.M."/>
            <person name="Van Dyck L."/>
            <person name="Vanoni M."/>
            <person name="Verhasselt P."/>
            <person name="Voet M."/>
            <person name="Volckaert G."/>
            <person name="Wambutt R."/>
            <person name="Watson M.D."/>
            <person name="Weber N."/>
            <person name="Wedler E."/>
            <person name="Wedler H."/>
            <person name="Wipfli P."/>
            <person name="Wolf K."/>
            <person name="Wright L.F."/>
            <person name="Zaccaria P."/>
            <person name="Zimmermann M."/>
            <person name="Zollner A."/>
            <person name="Kleine K."/>
        </authorList>
    </citation>
    <scope>NUCLEOTIDE SEQUENCE [LARGE SCALE GENOMIC DNA]</scope>
    <source>
        <strain>ATCC 204508 / S288c</strain>
    </source>
</reference>
<reference key="5">
    <citation type="journal article" date="1998" name="J. Cell Biol.">
        <title>Saccharomyces cerevisiae Duo1p and Dam1p, novel proteins involved in mitotic spindle function.</title>
        <authorList>
            <person name="Hofmann C."/>
            <person name="Cheeseman I.M."/>
            <person name="Goode B.L."/>
            <person name="McDonald K.L."/>
            <person name="Barnes G."/>
            <person name="Drubin D.G."/>
        </authorList>
    </citation>
    <scope>FUNCTION</scope>
    <scope>SUBCELLULAR LOCATION</scope>
</reference>
<reference key="6">
    <citation type="journal article" date="1999" name="Mol. Biol. Cell">
        <title>Yeast Dam1p is required to maintain spindle integrity during mitosis and interacts with the Mps1p kinase.</title>
        <authorList>
            <person name="Jones M.H."/>
            <person name="Bachant J.B."/>
            <person name="Castillo A.R."/>
            <person name="Giddings T.H. Jr."/>
            <person name="Winey M."/>
        </authorList>
    </citation>
    <scope>MUTAGENESIS OF CYS-111</scope>
</reference>
<reference key="7">
    <citation type="journal article" date="2001" name="J. Cell Biol.">
        <title>Functional cooperation of Dam1, Ipl1, and the inner centromere protein (INCENP)-related protein Sli15 during chromosome segregation.</title>
        <authorList>
            <person name="Kang J.-S."/>
            <person name="Cheeseman I.M."/>
            <person name="Kallstrom G."/>
            <person name="Velmurugan S."/>
            <person name="Barnes G."/>
            <person name="Chan C.S.M."/>
        </authorList>
    </citation>
    <scope>FUNCTION</scope>
    <scope>PHOSPHORYLATION</scope>
</reference>
<reference key="8">
    <citation type="journal article" date="2001" name="Proc. Natl. Acad. Sci. U.S.A.">
        <title>Yeast Dam1p has a role at the kinetochore in assembly of the mitotic spindle.</title>
        <authorList>
            <person name="Jones M.H."/>
            <person name="He X."/>
            <person name="Giddings T.H. Jr."/>
            <person name="Winey M."/>
        </authorList>
    </citation>
    <scope>FUNCTION</scope>
    <scope>SUBCELLULAR LOCATION</scope>
</reference>
<reference key="9">
    <citation type="journal article" date="2002" name="Cell">
        <title>Phospho-regulation of kinetochore-microtubule attachments by the Aurora kinase Ipl1p.</title>
        <authorList>
            <person name="Cheeseman I.M."/>
            <person name="Anderson S."/>
            <person name="Jwa M."/>
            <person name="Green E.M."/>
            <person name="Kang J.-S."/>
            <person name="Yates J.R. III"/>
            <person name="Chan C.S.M."/>
            <person name="Drubin D.G."/>
            <person name="Barnes G."/>
        </authorList>
    </citation>
    <scope>PHOSPHORYLATION AT SER-20; SER-257; SER-265 AND SER-292</scope>
</reference>
<reference key="10">
    <citation type="journal article" date="2002" name="EMBO J.">
        <title>Four new subunits of the Dam1-Duo1 complex reveal novel functions in sister kinetochore biorientation.</title>
        <authorList>
            <person name="Janke C."/>
            <person name="Ortiz J."/>
            <person name="Tanaka T.U."/>
            <person name="Lechner J."/>
            <person name="Schiebel E."/>
        </authorList>
    </citation>
    <scope>IDENTIFICATION IN THE DASH COMPLEX</scope>
    <scope>IDENTIFICATION BY MASS SPECTROMETRY</scope>
</reference>
<reference key="11">
    <citation type="journal article" date="2003" name="Mol. Biol. Cell">
        <title>Kinetochore protein interactions and their regulation by the Aurora kinase Ipl1p.</title>
        <authorList>
            <person name="Shang C."/>
            <person name="Hazbun T.R."/>
            <person name="Cheeseman I.M."/>
            <person name="Aranda J."/>
            <person name="Fields S."/>
            <person name="Drubin D.G."/>
            <person name="Barnes G."/>
        </authorList>
    </citation>
    <scope>INTERACTION WITH SPC34 AND TID3</scope>
</reference>
<reference key="12">
    <citation type="journal article" date="2005" name="Mol. Cell">
        <title>Formation of a dynamic kinetochore-microtubule interface through assembly of the Dam1 ring complex.</title>
        <authorList>
            <person name="Westermann S."/>
            <person name="Avila-Sakar A."/>
            <person name="Wang H.-W."/>
            <person name="Niederstrasser H."/>
            <person name="Wong J."/>
            <person name="Drubin D.G."/>
            <person name="Nogales E."/>
            <person name="Barnes G."/>
        </authorList>
    </citation>
    <scope>FUNCTION</scope>
</reference>
<reference key="13">
    <citation type="journal article" date="2006" name="Nature">
        <title>The Dam1 kinetochore ring complex moves processively on depolymerizing microtubule ends.</title>
        <authorList>
            <person name="Westermann S."/>
            <person name="Wang H.-W."/>
            <person name="Avila-Sakar A."/>
            <person name="Drubin D.G."/>
            <person name="Nogales E."/>
            <person name="Barnes G."/>
        </authorList>
    </citation>
    <scope>FUNCTION</scope>
</reference>
<reference key="14">
    <citation type="journal article" date="2006" name="Nat. Cell Biol.">
        <title>Molecular architecture of a kinetochore-microtubule attachment site.</title>
        <authorList>
            <person name="Joglekar A.P."/>
            <person name="Bouck D.C."/>
            <person name="Molk J.N."/>
            <person name="Bloom K.S."/>
            <person name="Salmon E.D."/>
        </authorList>
    </citation>
    <scope>IDENTIFICATION IN THE DASH COMPLEX</scope>
</reference>
<reference key="15">
    <citation type="journal article" date="2006" name="Proc. Natl. Acad. Sci. U.S.A.">
        <title>The Dam1 kinetochore complex harnesses microtubule dynamics to produce force and movement.</title>
        <authorList>
            <person name="Asbury C.L."/>
            <person name="Gestaut D.R."/>
            <person name="Powers A.F."/>
            <person name="Franck A.D."/>
            <person name="Davis T.N."/>
        </authorList>
    </citation>
    <scope>FUNCTION</scope>
</reference>
<reference key="16">
    <citation type="journal article" date="2007" name="Genes Dev.">
        <title>Kinetochore microtubule interaction during S phase in Saccharomyces cerevisiae.</title>
        <authorList>
            <person name="Kitamura E."/>
            <person name="Tanaka K."/>
            <person name="Kitamura Y."/>
            <person name="Tanaka T.U."/>
        </authorList>
    </citation>
    <scope>FUNCTION</scope>
</reference>
<reference key="17">
    <citation type="journal article" date="2007" name="J. Cell Biol.">
        <title>Molecular mechanisms of microtubule-dependent kinetochore transport toward spindle poles.</title>
        <authorList>
            <person name="Tanaka K."/>
            <person name="Kitamura E."/>
            <person name="Kitamura Y."/>
            <person name="Tanaka T.U."/>
        </authorList>
    </citation>
    <scope>FUNCTION</scope>
    <scope>SUBCELLULAR LOCATION</scope>
</reference>
<reference key="18">
    <citation type="journal article" date="2007" name="Mol. Biol. Cell">
        <title>Protein arms in the kinetochore-microtubule interface of the yeast DASH complex.</title>
        <authorList>
            <person name="Miranda J.J."/>
            <person name="King D.S."/>
            <person name="Harrison S.C."/>
        </authorList>
    </citation>
    <scope>FUNCTION</scope>
    <scope>IDENTIFICATION IN THE DASH COMPLEX</scope>
</reference>
<reference key="19">
    <citation type="journal article" date="2007" name="J. Proteome Res.">
        <title>Large-scale phosphorylation analysis of alpha-factor-arrested Saccharomyces cerevisiae.</title>
        <authorList>
            <person name="Li X."/>
            <person name="Gerber S.A."/>
            <person name="Rudner A.D."/>
            <person name="Beausoleil S.A."/>
            <person name="Haas W."/>
            <person name="Villen J."/>
            <person name="Elias J.E."/>
            <person name="Gygi S.P."/>
        </authorList>
    </citation>
    <scope>PHOSPHORYLATION [LARGE SCALE ANALYSIS] AT SER-31</scope>
    <scope>IDENTIFICATION BY MASS SPECTROMETRY [LARGE SCALE ANALYSIS]</scope>
    <source>
        <strain>ADR376</strain>
    </source>
</reference>
<reference key="20">
    <citation type="journal article" date="2008" name="Mol. Cell. Proteomics">
        <title>A multidimensional chromatography technology for in-depth phosphoproteome analysis.</title>
        <authorList>
            <person name="Albuquerque C.P."/>
            <person name="Smolka M.B."/>
            <person name="Payne S.H."/>
            <person name="Bafna V."/>
            <person name="Eng J."/>
            <person name="Zhou H."/>
        </authorList>
    </citation>
    <scope>IDENTIFICATION BY MASS SPECTROMETRY [LARGE SCALE ANALYSIS]</scope>
</reference>
<reference key="21">
    <citation type="journal article" date="2009" name="Science">
        <title>Global analysis of Cdk1 substrate phosphorylation sites provides insights into evolution.</title>
        <authorList>
            <person name="Holt L.J."/>
            <person name="Tuch B.B."/>
            <person name="Villen J."/>
            <person name="Johnson A.D."/>
            <person name="Gygi S.P."/>
            <person name="Morgan D.O."/>
        </authorList>
    </citation>
    <scope>PHOSPHORYLATION [LARGE SCALE ANALYSIS] AT SER-265 AND SER-292</scope>
    <scope>IDENTIFICATION BY MASS SPECTROMETRY [LARGE SCALE ANALYSIS]</scope>
</reference>
<reference key="22">
    <citation type="journal article" date="2011" name="Curr. Biol.">
        <title>The Ndc80 loop region facilitates formation of kinetochore attachment to the dynamic microtubule plus end.</title>
        <authorList>
            <person name="Maure J.F."/>
            <person name="Komoto S."/>
            <person name="Oku Y."/>
            <person name="Mino A."/>
            <person name="Pasqualato S."/>
            <person name="Natsume K."/>
            <person name="Clayton L."/>
            <person name="Musacchio A."/>
            <person name="Tanaka T.U."/>
        </authorList>
    </citation>
    <scope>INTERACTION WITH NDC80</scope>
    <scope>SUBCELLULAR LOCATION</scope>
</reference>
<reference key="23">
    <citation type="journal article" date="2012" name="Proc. Natl. Acad. Sci. U.S.A.">
        <title>N-terminal acetylome analyses and functional insights of the N-terminal acetyltransferase NatB.</title>
        <authorList>
            <person name="Van Damme P."/>
            <person name="Lasa M."/>
            <person name="Polevoda B."/>
            <person name="Gazquez C."/>
            <person name="Elosegui-Artola A."/>
            <person name="Kim D.S."/>
            <person name="De Juan-Pardo E."/>
            <person name="Demeyer K."/>
            <person name="Hole K."/>
            <person name="Larrea E."/>
            <person name="Timmerman E."/>
            <person name="Prieto J."/>
            <person name="Arnesen T."/>
            <person name="Sherman F."/>
            <person name="Gevaert K."/>
            <person name="Aldabe R."/>
        </authorList>
    </citation>
    <scope>ACETYLATION [LARGE SCALE ANALYSIS] AT SER-2</scope>
    <scope>CLEAVAGE OF INITIATOR METHIONINE [LARGE SCALE ANALYSIS]</scope>
    <scope>IDENTIFICATION BY MASS SPECTROMETRY [LARGE SCALE ANALYSIS]</scope>
</reference>
<reference key="24">
    <citation type="journal article" date="2014" name="Curr. Biol.">
        <title>Assembling the protein architecture of the budding yeast kinetochore-microtubule attachment using FRET.</title>
        <authorList>
            <person name="Aravamudhan P."/>
            <person name="Felzer-Kim I."/>
            <person name="Gurunathan K."/>
            <person name="Joglekar A.P."/>
        </authorList>
    </citation>
    <scope>IDENTIFICATION IN THE DASH COMPLEX</scope>
</reference>
<reference key="25">
    <citation type="journal article" date="2014" name="Nat. Commun.">
        <title>Kinetochores require oligomerization of Dam1 complex to maintain microtubule attachments against tension and promote biorientation.</title>
        <authorList>
            <person name="Umbreit N.T."/>
            <person name="Miller M.P."/>
            <person name="Tien J.F."/>
            <person name="Ortola J.C."/>
            <person name="Gui L."/>
            <person name="Lee K.K."/>
            <person name="Biggins S."/>
            <person name="Asbury C.L."/>
            <person name="Davis T.N."/>
        </authorList>
    </citation>
    <scope>FUNCTION</scope>
    <scope>IDENTIFICATION IN THE DASH COMPLEX</scope>
</reference>
<reference key="26">
    <citation type="journal article" date="2023" name="Cell Rep.">
        <title>Single-copy locus proteomics of early- and late-firing DNA replication origins identifies a role of Ask1/DASH complex in replication timing control.</title>
        <authorList>
            <person name="Weibeta M."/>
            <person name="Chanou A."/>
            <person name="Schauer T."/>
            <person name="Tvardovskiy A."/>
            <person name="Meiser S."/>
            <person name="Koenig A.C."/>
            <person name="Schmidt T."/>
            <person name="Kruse E."/>
            <person name="Ummethum H."/>
            <person name="Trauner M."/>
            <person name="Werner M."/>
            <person name="Lalonde M."/>
            <person name="Hauck S.M."/>
            <person name="Scialdone A."/>
            <person name="Hamperl S."/>
        </authorList>
    </citation>
    <scope>FUNCTION</scope>
</reference>
<reference key="27">
    <citation type="journal article" date="2023" name="EMBO J.">
        <title>DASH/Dam1 complex mutants stabilize ploidy in histone-humanized yeast by weakening kinetochore-microtubule attachments.</title>
        <authorList>
            <person name="Haase M.A.B."/>
            <person name="Olafsson G."/>
            <person name="Flores R.L."/>
            <person name="Boakye-Ansah E."/>
            <person name="Zelter A."/>
            <person name="Dickinson M.S."/>
            <person name="Lazar-Stefanita L."/>
            <person name="Truong D.M."/>
            <person name="Asbury C.L."/>
            <person name="Davis T.N."/>
            <person name="Boeke J.D."/>
        </authorList>
    </citation>
    <scope>MUTAGENESIS OF ASN-80</scope>
</reference>
<reference key="28">
    <citation type="journal article" date="2005" name="Nat. Struct. Mol. Biol.">
        <title>The yeast DASH complex forms closed rings on microtubules.</title>
        <authorList>
            <person name="Miranda J.L."/>
            <person name="Wulf P.D."/>
            <person name="Sorger P.K."/>
            <person name="Harrison S.C."/>
        </authorList>
    </citation>
    <scope>ELECTRON MICROSCOPY OF DASH COMPLEX ALONE AND BOUND TO MICROTUBULES</scope>
    <scope>FUNCTION</scope>
    <scope>IDENTIFICATION IN THE DASH COMPLEX</scope>
</reference>
<reference key="29">
    <citation type="journal article" date="2007" name="Nat. Struct. Mol. Biol.">
        <title>Architecture of the Dam1 kinetochore ring complex and implications for microtubule-driven assembly and force-coupling mechanisms.</title>
        <authorList>
            <person name="Wang H.W."/>
            <person name="Ramey V.H."/>
            <person name="Westermann S."/>
            <person name="Leschziner A.E."/>
            <person name="Welburn J.P."/>
            <person name="Nakajima Y."/>
            <person name="Drubin D.G."/>
            <person name="Barnes G."/>
            <person name="Nogales E."/>
        </authorList>
    </citation>
    <scope>ELECTRON MICROSCOPY OF DASH COMPLEX</scope>
    <scope>FUNCTION</scope>
    <scope>IDENTIFICATION IN THE DASH COMPLEX</scope>
    <scope>SUBUNIT</scope>
</reference>
<reference evidence="27" key="30">
    <citation type="journal article" date="2023" name="Open Biol.">
        <title>Structure of the Ndc80 complex and its interactions at the yeast kinetochore-microtubule interface.</title>
        <authorList>
            <person name="Zahm J.A."/>
            <person name="Jenni S."/>
            <person name="Harrison S.C."/>
        </authorList>
    </citation>
    <scope>X-RAY CRYSTALLOGRAPHY (3.22 ANGSTROMS) OF 252-305</scope>
    <scope>INTERACTION WITH NDC80</scope>
</reference>
<keyword id="KW-0002">3D-structure</keyword>
<keyword id="KW-0007">Acetylation</keyword>
<keyword id="KW-0131">Cell cycle</keyword>
<keyword id="KW-0132">Cell division</keyword>
<keyword id="KW-0137">Centromere</keyword>
<keyword id="KW-0158">Chromosome</keyword>
<keyword id="KW-0159">Chromosome partition</keyword>
<keyword id="KW-0175">Coiled coil</keyword>
<keyword id="KW-0963">Cytoplasm</keyword>
<keyword id="KW-0206">Cytoskeleton</keyword>
<keyword id="KW-0995">Kinetochore</keyword>
<keyword id="KW-0493">Microtubule</keyword>
<keyword id="KW-0498">Mitosis</keyword>
<keyword id="KW-0539">Nucleus</keyword>
<keyword id="KW-0597">Phosphoprotein</keyword>
<keyword id="KW-1185">Reference proteome</keyword>
<protein>
    <recommendedName>
        <fullName>DASH complex subunit DAM1</fullName>
    </recommendedName>
    <alternativeName>
        <fullName>DUO1 and MPS1-interacting protein 1</fullName>
    </alternativeName>
    <alternativeName>
        <fullName>Kinetochore assembly protein DAM1</fullName>
    </alternativeName>
    <alternativeName>
        <fullName>Outer kinetochore protein DAM1</fullName>
    </alternativeName>
</protein>
<dbReference type="EMBL" id="AF280542">
    <property type="protein sequence ID" value="AAF82130.1"/>
    <property type="molecule type" value="Genomic_DNA"/>
</dbReference>
<dbReference type="EMBL" id="Z72898">
    <property type="protein sequence ID" value="CAA97121.1"/>
    <property type="status" value="ALT_FRAME"/>
    <property type="molecule type" value="Genomic_DNA"/>
</dbReference>
<dbReference type="EMBL" id="BK006941">
    <property type="protein sequence ID" value="DAA08207.1"/>
    <property type="molecule type" value="Genomic_DNA"/>
</dbReference>
<dbReference type="PIR" id="S64421">
    <property type="entry name" value="S64421"/>
</dbReference>
<dbReference type="RefSeq" id="NP_011628.4">
    <property type="nucleotide sequence ID" value="NM_001181242.3"/>
</dbReference>
<dbReference type="PDB" id="8G0Q">
    <property type="method" value="X-ray"/>
    <property type="resolution" value="3.22 A"/>
    <property type="chains" value="B/D=252-305"/>
</dbReference>
<dbReference type="PDB" id="8Q84">
    <property type="method" value="EM"/>
    <property type="resolution" value="3.15 A"/>
    <property type="chains" value="I/U/e=1-343"/>
</dbReference>
<dbReference type="PDB" id="8Q85">
    <property type="method" value="EM"/>
    <property type="resolution" value="3.97 A"/>
    <property type="chains" value="U=1-343"/>
</dbReference>
<dbReference type="PDB" id="8QAU">
    <property type="method" value="EM"/>
    <property type="resolution" value="3.54 A"/>
    <property type="chains" value="E=1-343"/>
</dbReference>
<dbReference type="PDBsum" id="8G0Q"/>
<dbReference type="PDBsum" id="8Q84"/>
<dbReference type="PDBsum" id="8Q85"/>
<dbReference type="PDBsum" id="8QAU"/>
<dbReference type="EMDB" id="EMD-18246"/>
<dbReference type="EMDB" id="EMD-18247"/>
<dbReference type="EMDB" id="EMD-18304"/>
<dbReference type="SMR" id="P53267"/>
<dbReference type="BioGRID" id="33360">
    <property type="interactions" value="720"/>
</dbReference>
<dbReference type="ComplexPortal" id="CPX-1041">
    <property type="entry name" value="DASH complex"/>
</dbReference>
<dbReference type="DIP" id="DIP-1286N"/>
<dbReference type="FunCoup" id="P53267">
    <property type="interactions" value="258"/>
</dbReference>
<dbReference type="IntAct" id="P53267">
    <property type="interactions" value="50"/>
</dbReference>
<dbReference type="MINT" id="P53267"/>
<dbReference type="STRING" id="4932.YGR113W"/>
<dbReference type="iPTMnet" id="P53267"/>
<dbReference type="PaxDb" id="4932-YGR113W"/>
<dbReference type="PeptideAtlas" id="P53267"/>
<dbReference type="EnsemblFungi" id="YGR113W_mRNA">
    <property type="protein sequence ID" value="YGR113W"/>
    <property type="gene ID" value="YGR113W"/>
</dbReference>
<dbReference type="GeneID" id="853010"/>
<dbReference type="KEGG" id="sce:YGR113W"/>
<dbReference type="AGR" id="SGD:S000003345"/>
<dbReference type="SGD" id="S000003345">
    <property type="gene designation" value="DAM1"/>
</dbReference>
<dbReference type="VEuPathDB" id="FungiDB:YGR113W"/>
<dbReference type="eggNOG" id="ENOG502S08R">
    <property type="taxonomic scope" value="Eukaryota"/>
</dbReference>
<dbReference type="HOGENOM" id="CLU_065404_0_0_1"/>
<dbReference type="InParanoid" id="P53267"/>
<dbReference type="OMA" id="GLMCNSW"/>
<dbReference type="OrthoDB" id="5586015at2759"/>
<dbReference type="BioCyc" id="YEAST:G3O-30822-MONOMER"/>
<dbReference type="BioGRID-ORCS" id="853010">
    <property type="hits" value="6 hits in 10 CRISPR screens"/>
</dbReference>
<dbReference type="CD-CODE" id="876000F7">
    <property type="entry name" value="Centrosome"/>
</dbReference>
<dbReference type="PRO" id="PR:P53267"/>
<dbReference type="Proteomes" id="UP000002311">
    <property type="component" value="Chromosome VII"/>
</dbReference>
<dbReference type="RNAct" id="P53267">
    <property type="molecule type" value="protein"/>
</dbReference>
<dbReference type="GO" id="GO:0005737">
    <property type="term" value="C:cytoplasm"/>
    <property type="evidence" value="ECO:0007669"/>
    <property type="project" value="UniProtKB-KW"/>
</dbReference>
<dbReference type="GO" id="GO:0042729">
    <property type="term" value="C:DASH complex"/>
    <property type="evidence" value="ECO:0000314"/>
    <property type="project" value="SGD"/>
</dbReference>
<dbReference type="GO" id="GO:0072686">
    <property type="term" value="C:mitotic spindle"/>
    <property type="evidence" value="ECO:0000303"/>
    <property type="project" value="ComplexPortal"/>
</dbReference>
<dbReference type="GO" id="GO:1990537">
    <property type="term" value="C:mitotic spindle polar microtubule"/>
    <property type="evidence" value="ECO:0000318"/>
    <property type="project" value="GO_Central"/>
</dbReference>
<dbReference type="GO" id="GO:0044732">
    <property type="term" value="C:mitotic spindle pole body"/>
    <property type="evidence" value="ECO:0000318"/>
    <property type="project" value="GO_Central"/>
</dbReference>
<dbReference type="GO" id="GO:0042802">
    <property type="term" value="F:identical protein binding"/>
    <property type="evidence" value="ECO:0000353"/>
    <property type="project" value="IntAct"/>
</dbReference>
<dbReference type="GO" id="GO:0008017">
    <property type="term" value="F:microtubule binding"/>
    <property type="evidence" value="ECO:0000314"/>
    <property type="project" value="SGD"/>
</dbReference>
<dbReference type="GO" id="GO:0008608">
    <property type="term" value="P:attachment of spindle microtubules to kinetochore"/>
    <property type="evidence" value="ECO:0000314"/>
    <property type="project" value="SGD"/>
</dbReference>
<dbReference type="GO" id="GO:0051301">
    <property type="term" value="P:cell division"/>
    <property type="evidence" value="ECO:0007669"/>
    <property type="project" value="UniProtKB-KW"/>
</dbReference>
<dbReference type="GO" id="GO:0098653">
    <property type="term" value="P:centromere clustering"/>
    <property type="evidence" value="ECO:0000314"/>
    <property type="project" value="SGD"/>
</dbReference>
<dbReference type="GO" id="GO:1990758">
    <property type="term" value="P:mitotic sister chromatid biorientation"/>
    <property type="evidence" value="ECO:0000314"/>
    <property type="project" value="ComplexPortal"/>
</dbReference>
<dbReference type="GO" id="GO:0051987">
    <property type="term" value="P:positive regulation of attachment of spindle microtubules to kinetochore"/>
    <property type="evidence" value="ECO:0000314"/>
    <property type="project" value="ComplexPortal"/>
</dbReference>
<dbReference type="GO" id="GO:0031116">
    <property type="term" value="P:positive regulation of microtubule polymerization"/>
    <property type="evidence" value="ECO:0000314"/>
    <property type="project" value="SGD"/>
</dbReference>
<dbReference type="GO" id="GO:0071459">
    <property type="term" value="P:protein localization to chromosome, centromeric region"/>
    <property type="evidence" value="ECO:0000314"/>
    <property type="project" value="SGD"/>
</dbReference>
<dbReference type="GO" id="GO:1990976">
    <property type="term" value="P:protein transport along microtubule to mitotic spindle pole body"/>
    <property type="evidence" value="ECO:0000315"/>
    <property type="project" value="UniProtKB"/>
</dbReference>
<dbReference type="InterPro" id="IPR013962">
    <property type="entry name" value="DASH_Dam1"/>
</dbReference>
<dbReference type="PANTHER" id="PTHR28113">
    <property type="entry name" value="DASH COMPLEX SUBUNIT DAM1"/>
    <property type="match status" value="1"/>
</dbReference>
<dbReference type="PANTHER" id="PTHR28113:SF1">
    <property type="entry name" value="DASH COMPLEX SUBUNIT DAM1"/>
    <property type="match status" value="1"/>
</dbReference>
<dbReference type="Pfam" id="PF08653">
    <property type="entry name" value="DASH_Dam1"/>
    <property type="match status" value="1"/>
</dbReference>
<gene>
    <name type="primary">DAM1</name>
    <name type="ordered locus">YGR113W</name>
    <name type="ORF">G6153</name>
</gene>
<organism>
    <name type="scientific">Saccharomyces cerevisiae (strain ATCC 204508 / S288c)</name>
    <name type="common">Baker's yeast</name>
    <dbReference type="NCBI Taxonomy" id="559292"/>
    <lineage>
        <taxon>Eukaryota</taxon>
        <taxon>Fungi</taxon>
        <taxon>Dikarya</taxon>
        <taxon>Ascomycota</taxon>
        <taxon>Saccharomycotina</taxon>
        <taxon>Saccharomycetes</taxon>
        <taxon>Saccharomycetales</taxon>
        <taxon>Saccharomycetaceae</taxon>
        <taxon>Saccharomyces</taxon>
    </lineage>
</organism>
<name>DAM1_YEAST</name>
<accession>P53267</accession>
<accession>D6VUP6</accession>
<accession>Q9P422</accession>
<feature type="initiator methionine" description="Removed" evidence="30">
    <location>
        <position position="1"/>
    </location>
</feature>
<feature type="chain" id="PRO_0000127663" description="DASH complex subunit DAM1">
    <location>
        <begin position="2"/>
        <end position="343"/>
    </location>
</feature>
<feature type="region of interest" description="Disordered" evidence="3">
    <location>
        <begin position="1"/>
        <end position="35"/>
    </location>
</feature>
<feature type="region of interest" description="Disordered" evidence="3">
    <location>
        <begin position="150"/>
        <end position="219"/>
    </location>
</feature>
<feature type="region of interest" description="Disordered" evidence="3">
    <location>
        <begin position="302"/>
        <end position="343"/>
    </location>
</feature>
<feature type="coiled-coil region" evidence="2">
    <location>
        <begin position="125"/>
        <end position="158"/>
    </location>
</feature>
<feature type="compositionally biased region" description="Polar residues" evidence="3">
    <location>
        <begin position="167"/>
        <end position="183"/>
    </location>
</feature>
<feature type="compositionally biased region" description="Acidic residues" evidence="3">
    <location>
        <begin position="207"/>
        <end position="217"/>
    </location>
</feature>
<feature type="compositionally biased region" description="Basic and acidic residues" evidence="3">
    <location>
        <begin position="316"/>
        <end position="336"/>
    </location>
</feature>
<feature type="modified residue" description="N-acetylserine" evidence="30">
    <location>
        <position position="2"/>
    </location>
</feature>
<feature type="modified residue" description="Phosphoserine; by IPL1" evidence="8">
    <location>
        <position position="20"/>
    </location>
</feature>
<feature type="modified residue" description="Phosphoserine" evidence="28">
    <location>
        <position position="31"/>
    </location>
</feature>
<feature type="modified residue" description="Phosphoserine; by IPL1" evidence="8">
    <location>
        <position position="257"/>
    </location>
</feature>
<feature type="modified residue" description="Phosphoserine; by IPL1" evidence="8 29">
    <location>
        <position position="265"/>
    </location>
</feature>
<feature type="modified residue" description="Phosphoserine; by IPL1" evidence="8 29">
    <location>
        <position position="292"/>
    </location>
</feature>
<feature type="mutagenesis site" description="Cold sensitive." evidence="22">
    <original>N</original>
    <variation>Y</variation>
    <location>
        <position position="80"/>
    </location>
</feature>
<feature type="mutagenesis site" description="In DAM1-1; produces abnormal spindles resulting in growth arrest at 34 degrees Celsius." evidence="4">
    <original>C</original>
    <variation>Y</variation>
    <location>
        <position position="111"/>
    </location>
</feature>
<feature type="helix" evidence="31">
    <location>
        <begin position="259"/>
        <end position="267"/>
    </location>
</feature>
<feature type="turn" evidence="31">
    <location>
        <begin position="290"/>
        <end position="292"/>
    </location>
</feature>
<comment type="function">
    <text evidence="5 6 8 10 11 12 14 15 16 17 18 21 23 25">Component of the DASH complex that connects microtubules with kinetochores and couples microtubule depolymerisation to chromosome movement; it is involved in retrieving kinetochores to the spindle poles before their re-orientation on the spindle in early mitosis and allows microtubule depolymerization to pull chromosomes apart and resist detachment during anaphase (PubMed:11698664, PubMed:11724818, PubMed:15664196, PubMed:16415853, PubMed:16777964, PubMed:17460120, PubMed:17643123, PubMed:9817759). Kinetochores, consisting of a centromere-associated inner segment and a microtubule-contacting outer segment, play a crucial role in chromosome segregation by mediating the physical connection between centromeric DNA and microtubules (PubMed:15664196, PubMed:17620411, PubMed:25236177). Kinetochores also serve as an input point for the spindle assembly checkpoint, which delays anaphase until all chromosomes have bioriented on the mitotic spindle (PubMed:11698664). During spindle-kinetochore attachment, kinetochores first attach to the lateral surface of spindle microtubules, which supports the congression of chromosomes toward the middle of the dividing cell; they then slide along towards the spindle pole, a process independent of the DASH complex but requiring the NDC80 complex (PubMed:17620411, PubMed:25236177). When the end of a disassembling microtubule reaches the laterally attached kinetochore, the DASH complex together with the NDC80 complex and STU2 convert lateral attachment to end-on capture to produce a structure that can track with microtubule shortening and sustain attachment when tension is applied across sister kinetochores upon their biorientation (PubMed:15640796, PubMed:15664196, PubMed:17620411, PubMed:25236177). Microtubule depolymerization proceeds by protofilament splaying and induces the kinetochore-attached DASH complex to slide longitudinally, thereby helping to transduce depolymerization energy into pulling forces to disjoin chromatids (PubMed:16415853, PubMed:16777964, PubMed:17620411). Incorrect microtubule attachments are corrected by releasing microubules from the kinetochore through phosphorylation by IPL1 of kinetochore components (PubMed:11724818, PubMed:12408861). Links the microtubule cytoskeleton to chromosomes during interphase (PubMed:36701236). Also contributes to the poleward transport of kinetochores on microtubules following centromeric DNA replication in S-phase (PubMed:18079178).</text>
</comment>
<comment type="subunit">
    <text evidence="1 7 9 10 13 15 17 19 20 21 24">Component of the DASH complex consisting of ASK1, DAD1, DAD2, DAD3, DAD4, DAM1, DUO1, HSK3, SPC19 and SPC34, with a stoichiometry of one copy of each subunit per complex (PubMed:11782438, PubMed:12925767, PubMed:15640796, PubMed:16715078, PubMed:17460120, PubMed:17643123, PubMed:24930965, PubMed:25236177). Multiple DASH complexes oligomerize to form a ring that encircles spindle microtubules and organizes the rod-like NDC80 complexes of the outer kinetochore (PubMed:16715078, PubMed:17460120, PubMed:17643123, PubMed:21256019, PubMed:25236177, PubMed:36883282). DASH complex oligomerization strengthens microtubule attachments (PubMed:25236177). Within the complex, DAM1 and DUO1 may form the microtubule connections (PubMed:17460120). On cytoplasmic microtubules, DASH complexes appear to form patches instead of rings (By similarity). Interacts with the outer kinetochore component NDC80; the interaction is direct (PubMed:21256019, PubMed:36883282).</text>
</comment>
<comment type="interaction">
    <interactant intactId="EBI-23268">
        <id>P53267</id>
    </interactant>
    <interactant intactId="EBI-3614">
        <id>P40013</id>
        <label>BIM1</label>
    </interactant>
    <organismsDiffer>false</organismsDiffer>
    <experiments>2</experiments>
</comment>
<comment type="interaction">
    <interactant intactId="EBI-23268">
        <id>P53267</id>
    </interactant>
    <interactant intactId="EBI-4069">
        <id>P32504</id>
        <label>CBF2</label>
    </interactant>
    <organismsDiffer>false</organismsDiffer>
    <experiments>2</experiments>
</comment>
<comment type="interaction">
    <interactant intactId="EBI-23268">
        <id>P53267</id>
    </interactant>
    <interactant intactId="EBI-5182">
        <id>P36012</id>
        <label>CSE4</label>
    </interactant>
    <organismsDiffer>false</organismsDiffer>
    <experiments>2</experiments>
</comment>
<comment type="interaction">
    <interactant intactId="EBI-23268">
        <id>P53267</id>
    </interactant>
    <interactant intactId="EBI-4085">
        <id>P35203</id>
        <label>CTF13</label>
    </interactant>
    <organismsDiffer>false</organismsDiffer>
    <experiments>2</experiments>
</comment>
<comment type="interaction">
    <interactant intactId="EBI-23268">
        <id>P53267</id>
    </interactant>
    <interactant intactId="EBI-5199">
        <id>Q02732</id>
        <label>CTF19</label>
    </interactant>
    <organismsDiffer>false</organismsDiffer>
    <experiments>2</experiments>
</comment>
<comment type="interaction">
    <interactant intactId="EBI-23268">
        <id>P53267</id>
    </interactant>
    <interactant intactId="EBI-35662">
        <id>Q12248</id>
        <label>DAD1</label>
    </interactant>
    <organismsDiffer>false</organismsDiffer>
    <experiments>5</experiments>
</comment>
<comment type="interaction">
    <interactant intactId="EBI-23268">
        <id>P53267</id>
    </interactant>
    <interactant intactId="EBI-23268">
        <id>P53267</id>
        <label>DAM1</label>
    </interactant>
    <organismsDiffer>false</organismsDiffer>
    <experiments>2</experiments>
</comment>
<comment type="interaction">
    <interactant intactId="EBI-23268">
        <id>P53267</id>
    </interactant>
    <interactant intactId="EBI-23800">
        <id>P53168</id>
        <label>DUO1</label>
    </interactant>
    <organismsDiffer>false</organismsDiffer>
    <experiments>7</experiments>
</comment>
<comment type="interaction">
    <interactant intactId="EBI-23268">
        <id>P53267</id>
    </interactant>
    <interactant intactId="EBI-25247">
        <id>P40460</id>
        <label>NDC80</label>
    </interactant>
    <organismsDiffer>false</organismsDiffer>
    <experiments>4</experiments>
</comment>
<comment type="interaction">
    <interactant intactId="EBI-23268">
        <id>P53267</id>
    </interactant>
    <interactant intactId="EBI-23429">
        <id>P53298</id>
        <label>OKP1</label>
    </interactant>
    <organismsDiffer>false</organismsDiffer>
    <experiments>2</experiments>
</comment>
<comment type="interaction">
    <interactant intactId="EBI-23268">
        <id>P53267</id>
    </interactant>
    <interactant intactId="EBI-20842">
        <id>P38283</id>
        <label>SLI15</label>
    </interactant>
    <organismsDiffer>false</organismsDiffer>
    <experiments>2</experiments>
</comment>
<comment type="interaction">
    <interactant intactId="EBI-23268">
        <id>P53267</id>
    </interactant>
    <interactant intactId="EBI-26401">
        <id>P36131</id>
        <label>SPC34</label>
    </interactant>
    <organismsDiffer>false</organismsDiffer>
    <experiments>5</experiments>
</comment>
<comment type="interaction">
    <interactant intactId="EBI-23268">
        <id>P53267</id>
    </interactant>
    <interactant intactId="EBI-18471">
        <id>P46675</id>
        <label>STU2</label>
    </interactant>
    <organismsDiffer>false</organismsDiffer>
    <experiments>3</experiments>
</comment>
<comment type="subcellular location">
    <subcellularLocation>
        <location evidence="5 19 25">Nucleus</location>
    </subcellularLocation>
    <subcellularLocation>
        <location evidence="16 25">Cytoplasm</location>
        <location evidence="16 25">Cytoskeleton</location>
        <location evidence="16 25">Spindle</location>
    </subcellularLocation>
    <subcellularLocation>
        <location evidence="5 19">Chromosome</location>
        <location evidence="5 19">Centromere</location>
        <location evidence="5 19">Kinetochore</location>
    </subcellularLocation>
    <text evidence="16 19 25">Associates with the mitotic spindle and the kinetochore (PubMed:21256019, PubMed:9817759). Localizes to microtubule plus-ends (PubMed:17620411).</text>
</comment>
<comment type="similarity">
    <text evidence="26">Belongs to the DASH complex DAM1 family.</text>
</comment>
<comment type="sequence caution" evidence="26">
    <conflict type="frameshift">
        <sequence resource="EMBL-CDS" id="CAA97121"/>
    </conflict>
</comment>